<evidence type="ECO:0000250" key="1"/>
<evidence type="ECO:0000250" key="2">
    <source>
        <dbReference type="UniProtKB" id="Q96C03"/>
    </source>
</evidence>
<evidence type="ECO:0000255" key="3"/>
<evidence type="ECO:0000256" key="4">
    <source>
        <dbReference type="SAM" id="MobiDB-lite"/>
    </source>
</evidence>
<evidence type="ECO:0000305" key="5"/>
<accession>Q6GQ81</accession>
<gene>
    <name type="primary">mief2</name>
    <name type="synonym">mid49</name>
    <name type="synonym">smcr7</name>
</gene>
<organism>
    <name type="scientific">Xenopus laevis</name>
    <name type="common">African clawed frog</name>
    <dbReference type="NCBI Taxonomy" id="8355"/>
    <lineage>
        <taxon>Eukaryota</taxon>
        <taxon>Metazoa</taxon>
        <taxon>Chordata</taxon>
        <taxon>Craniata</taxon>
        <taxon>Vertebrata</taxon>
        <taxon>Euteleostomi</taxon>
        <taxon>Amphibia</taxon>
        <taxon>Batrachia</taxon>
        <taxon>Anura</taxon>
        <taxon>Pipoidea</taxon>
        <taxon>Pipidae</taxon>
        <taxon>Xenopodinae</taxon>
        <taxon>Xenopus</taxon>
        <taxon>Xenopus</taxon>
    </lineage>
</organism>
<sequence>MAELQIRKKEKKSGDGIGTMVDFLLANARLVLGVGGAAMLGIATLAVKRLIDRATSPPSDKEAEEKAEQKSIEESWKEAVLKKASPTLRRKEDLEHHCAPLSLPDPSQKMPEATGTSQVKASDEIKKIPICFTLQERLLNYHTHHASVPEVQMEEARQLVLDIKKELQEFLHAKHPEMPFLALHLGGSFGNRLPMSCLDHACLIMPLVLEPDLWCVIPGQKTILSDPNFCMVKRIDLEYTSRGSSPWDRFLVGAYLSSRTMVQSLHKTIVGSINWPAIGTVLDCTIKPDITSDELKLEVVHPNGHMIIRILPMAVIKDADLLAHCCATAPAENLWQRSFYKKEVSRLQELDSSDSGIRLKCLQILKGICRDCPSLCHLNSTHLRHILLHLSTESSDWTETALADRFLQVLEELIGYLDKGFLPSYFNDKLNLFSSLKAEDIEELGYGLYQVFSEPDDVLKRER</sequence>
<comment type="function">
    <text evidence="2">Mitochondrial outer membrane protein which regulates mitochondrial organization (By similarity). It is required for mitochondrial fission and promotes the recruitment and association of the fission mediator dynamin-related protein 1 (DNM1L) to the mitochondrial surface independently of the mitochondrial fission FIS1 and MFF proteins (By similarity). Regulates DNM1L GTPase activity (By similarity).</text>
</comment>
<comment type="subcellular location">
    <subcellularLocation>
        <location evidence="1">Mitochondrion outer membrane</location>
        <topology evidence="1">Single-pass membrane protein</topology>
    </subcellularLocation>
</comment>
<comment type="miscellaneous">
    <text evidence="1">Does not bind ADP or other nucleotides, in contrast to MIEF1.</text>
</comment>
<comment type="similarity">
    <text evidence="5">Belongs to the MID49/MID51 family.</text>
</comment>
<feature type="chain" id="PRO_0000310454" description="Mitochondrial dynamics protein MID49">
    <location>
        <begin position="1"/>
        <end position="463"/>
    </location>
</feature>
<feature type="topological domain" description="Mitochondrial intermembrane" evidence="3">
    <location>
        <begin position="1"/>
        <end position="24"/>
    </location>
</feature>
<feature type="transmembrane region" description="Helical" evidence="3">
    <location>
        <begin position="25"/>
        <end position="47"/>
    </location>
</feature>
<feature type="topological domain" description="Cytoplasmic" evidence="3">
    <location>
        <begin position="48"/>
        <end position="463"/>
    </location>
</feature>
<feature type="region of interest" description="Disordered" evidence="4">
    <location>
        <begin position="87"/>
        <end position="119"/>
    </location>
</feature>
<feature type="compositionally biased region" description="Basic and acidic residues" evidence="4">
    <location>
        <begin position="89"/>
        <end position="98"/>
    </location>
</feature>
<name>MID49_XENLA</name>
<keyword id="KW-0472">Membrane</keyword>
<keyword id="KW-0496">Mitochondrion</keyword>
<keyword id="KW-1000">Mitochondrion outer membrane</keyword>
<keyword id="KW-1185">Reference proteome</keyword>
<keyword id="KW-0812">Transmembrane</keyword>
<keyword id="KW-1133">Transmembrane helix</keyword>
<reference key="1">
    <citation type="submission" date="2004-06" db="EMBL/GenBank/DDBJ databases">
        <authorList>
            <consortium name="NIH - Xenopus Gene Collection (XGC) project"/>
        </authorList>
    </citation>
    <scope>NUCLEOTIDE SEQUENCE [LARGE SCALE MRNA]</scope>
    <source>
        <tissue>Ovary</tissue>
    </source>
</reference>
<protein>
    <recommendedName>
        <fullName>Mitochondrial dynamics protein MID49</fullName>
    </recommendedName>
    <alternativeName>
        <fullName>Mitochondrial dynamics protein of 49 kDa homolog</fullName>
    </alternativeName>
    <alternativeName>
        <fullName>Mitochondrial elongation factor 2</fullName>
    </alternativeName>
    <alternativeName>
        <fullName>Smith-Magenis syndrome chromosomal region candidate gene 7 protein homolog</fullName>
    </alternativeName>
</protein>
<proteinExistence type="evidence at transcript level"/>
<dbReference type="EMBL" id="BC072866">
    <property type="protein sequence ID" value="AAH72866.1"/>
    <property type="molecule type" value="mRNA"/>
</dbReference>
<dbReference type="RefSeq" id="NP_001085509.1">
    <property type="nucleotide sequence ID" value="NM_001092040.1"/>
</dbReference>
<dbReference type="SMR" id="Q6GQ81"/>
<dbReference type="DNASU" id="443935"/>
<dbReference type="GeneID" id="443935"/>
<dbReference type="KEGG" id="xla:443935"/>
<dbReference type="AGR" id="Xenbase:XB-GENE-977726"/>
<dbReference type="CTD" id="443935"/>
<dbReference type="Xenbase" id="XB-GENE-977726">
    <property type="gene designation" value="mief2.S"/>
</dbReference>
<dbReference type="OrthoDB" id="5964386at2759"/>
<dbReference type="Proteomes" id="UP000186698">
    <property type="component" value="Chromosome 9_10S"/>
</dbReference>
<dbReference type="Bgee" id="443935">
    <property type="expression patterns" value="Expressed in ovary and 19 other cell types or tissues"/>
</dbReference>
<dbReference type="GO" id="GO:0005741">
    <property type="term" value="C:mitochondrial outer membrane"/>
    <property type="evidence" value="ECO:0000250"/>
    <property type="project" value="UniProtKB"/>
</dbReference>
<dbReference type="GO" id="GO:0005739">
    <property type="term" value="C:mitochondrion"/>
    <property type="evidence" value="ECO:0000250"/>
    <property type="project" value="UniProtKB"/>
</dbReference>
<dbReference type="GO" id="GO:0007005">
    <property type="term" value="P:mitochondrion organization"/>
    <property type="evidence" value="ECO:0000250"/>
    <property type="project" value="UniProtKB"/>
</dbReference>
<dbReference type="GO" id="GO:0090141">
    <property type="term" value="P:positive regulation of mitochondrial fission"/>
    <property type="evidence" value="ECO:0000250"/>
    <property type="project" value="UniProtKB"/>
</dbReference>
<dbReference type="GO" id="GO:0090314">
    <property type="term" value="P:positive regulation of protein targeting to membrane"/>
    <property type="evidence" value="ECO:0000250"/>
    <property type="project" value="UniProtKB"/>
</dbReference>
<dbReference type="FunFam" id="1.10.1410.40:FF:000003">
    <property type="entry name" value="Mitochondrial dynamics protein MID51"/>
    <property type="match status" value="1"/>
</dbReference>
<dbReference type="FunFam" id="3.30.460.90:FF:000008">
    <property type="entry name" value="Mitochondrial elongation factor 2"/>
    <property type="match status" value="1"/>
</dbReference>
<dbReference type="Gene3D" id="1.10.1410.40">
    <property type="match status" value="1"/>
</dbReference>
<dbReference type="Gene3D" id="3.30.460.90">
    <property type="match status" value="1"/>
</dbReference>
<dbReference type="InterPro" id="IPR046906">
    <property type="entry name" value="Mab-21_HhH/H2TH-like"/>
</dbReference>
<dbReference type="InterPro" id="IPR024810">
    <property type="entry name" value="MAB21L/cGLR"/>
</dbReference>
<dbReference type="InterPro" id="IPR045909">
    <property type="entry name" value="MID49/MID51"/>
</dbReference>
<dbReference type="InterPro" id="IPR049097">
    <property type="entry name" value="MID51-like_C"/>
</dbReference>
<dbReference type="PANTHER" id="PTHR16451:SF11">
    <property type="entry name" value="MITOCHONDRIAL DYNAMICS PROTEIN MID49"/>
    <property type="match status" value="1"/>
</dbReference>
<dbReference type="PANTHER" id="PTHR16451">
    <property type="entry name" value="MITOCHONDRIAL DYNAMICS PROTEINS 49/51 FAMILY MEMBER"/>
    <property type="match status" value="1"/>
</dbReference>
<dbReference type="Pfam" id="PF20266">
    <property type="entry name" value="Mab-21_C"/>
    <property type="match status" value="1"/>
</dbReference>
<dbReference type="Pfam" id="PF21297">
    <property type="entry name" value="MID51-like_C"/>
    <property type="match status" value="1"/>
</dbReference>
<dbReference type="SMART" id="SM01265">
    <property type="entry name" value="Mab-21"/>
    <property type="match status" value="1"/>
</dbReference>